<keyword id="KW-0560">Oxidoreductase</keyword>
<keyword id="KW-1185">Reference proteome</keyword>
<keyword id="KW-0819">tRNA processing</keyword>
<name>TRHO_ROSDO</name>
<dbReference type="EC" id="1.14.-.-" evidence="1"/>
<dbReference type="EMBL" id="CP000362">
    <property type="protein sequence ID" value="ABG30286.1"/>
    <property type="molecule type" value="Genomic_DNA"/>
</dbReference>
<dbReference type="RefSeq" id="WP_011566908.1">
    <property type="nucleotide sequence ID" value="NC_008209.1"/>
</dbReference>
<dbReference type="SMR" id="Q16CK7"/>
<dbReference type="STRING" id="375451.RD1_0584"/>
<dbReference type="KEGG" id="rde:RD1_0584"/>
<dbReference type="eggNOG" id="COG1054">
    <property type="taxonomic scope" value="Bacteria"/>
</dbReference>
<dbReference type="HOGENOM" id="CLU_038878_0_0_5"/>
<dbReference type="OrthoDB" id="9778326at2"/>
<dbReference type="Proteomes" id="UP000007029">
    <property type="component" value="Chromosome"/>
</dbReference>
<dbReference type="GO" id="GO:0016705">
    <property type="term" value="F:oxidoreductase activity, acting on paired donors, with incorporation or reduction of molecular oxygen"/>
    <property type="evidence" value="ECO:0007669"/>
    <property type="project" value="UniProtKB-UniRule"/>
</dbReference>
<dbReference type="GO" id="GO:0006400">
    <property type="term" value="P:tRNA modification"/>
    <property type="evidence" value="ECO:0007669"/>
    <property type="project" value="UniProtKB-UniRule"/>
</dbReference>
<dbReference type="CDD" id="cd01518">
    <property type="entry name" value="RHOD_YceA"/>
    <property type="match status" value="1"/>
</dbReference>
<dbReference type="Gene3D" id="3.30.70.100">
    <property type="match status" value="1"/>
</dbReference>
<dbReference type="Gene3D" id="3.40.250.10">
    <property type="entry name" value="Rhodanese-like domain"/>
    <property type="match status" value="1"/>
</dbReference>
<dbReference type="HAMAP" id="MF_00469">
    <property type="entry name" value="TrhO"/>
    <property type="match status" value="1"/>
</dbReference>
<dbReference type="InterPro" id="IPR001763">
    <property type="entry name" value="Rhodanese-like_dom"/>
</dbReference>
<dbReference type="InterPro" id="IPR036873">
    <property type="entry name" value="Rhodanese-like_dom_sf"/>
</dbReference>
<dbReference type="InterPro" id="IPR020936">
    <property type="entry name" value="TrhO"/>
</dbReference>
<dbReference type="InterPro" id="IPR040503">
    <property type="entry name" value="TRHO_N"/>
</dbReference>
<dbReference type="NCBIfam" id="NF001136">
    <property type="entry name" value="PRK00142.1-4"/>
    <property type="match status" value="1"/>
</dbReference>
<dbReference type="PANTHER" id="PTHR43268:SF3">
    <property type="entry name" value="RHODANESE-LIKE DOMAIN-CONTAINING PROTEIN 7-RELATED"/>
    <property type="match status" value="1"/>
</dbReference>
<dbReference type="PANTHER" id="PTHR43268">
    <property type="entry name" value="THIOSULFATE SULFURTRANSFERASE/RHODANESE-LIKE DOMAIN-CONTAINING PROTEIN 2"/>
    <property type="match status" value="1"/>
</dbReference>
<dbReference type="Pfam" id="PF00581">
    <property type="entry name" value="Rhodanese"/>
    <property type="match status" value="1"/>
</dbReference>
<dbReference type="Pfam" id="PF17773">
    <property type="entry name" value="UPF0176_N"/>
    <property type="match status" value="1"/>
</dbReference>
<dbReference type="SMART" id="SM00450">
    <property type="entry name" value="RHOD"/>
    <property type="match status" value="1"/>
</dbReference>
<dbReference type="SUPFAM" id="SSF52821">
    <property type="entry name" value="Rhodanese/Cell cycle control phosphatase"/>
    <property type="match status" value="1"/>
</dbReference>
<dbReference type="PROSITE" id="PS50206">
    <property type="entry name" value="RHODANESE_3"/>
    <property type="match status" value="1"/>
</dbReference>
<evidence type="ECO:0000255" key="1">
    <source>
        <dbReference type="HAMAP-Rule" id="MF_00469"/>
    </source>
</evidence>
<reference key="1">
    <citation type="journal article" date="2007" name="J. Bacteriol.">
        <title>The complete genome sequence of Roseobacter denitrificans reveals a mixotrophic rather than photosynthetic metabolism.</title>
        <authorList>
            <person name="Swingley W.D."/>
            <person name="Sadekar S."/>
            <person name="Mastrian S.D."/>
            <person name="Matthies H.J."/>
            <person name="Hao J."/>
            <person name="Ramos H."/>
            <person name="Acharya C.R."/>
            <person name="Conrad A.L."/>
            <person name="Taylor H.L."/>
            <person name="Dejesa L.C."/>
            <person name="Shah M.K."/>
            <person name="O'Huallachain M.E."/>
            <person name="Lince M.T."/>
            <person name="Blankenship R.E."/>
            <person name="Beatty J.T."/>
            <person name="Touchman J.W."/>
        </authorList>
    </citation>
    <scope>NUCLEOTIDE SEQUENCE [LARGE SCALE GENOMIC DNA]</scope>
    <source>
        <strain>ATCC 33942 / OCh 114</strain>
    </source>
</reference>
<gene>
    <name evidence="1" type="primary">trhO</name>
    <name type="ordered locus">RD1_0584</name>
</gene>
<sequence>MFIIAALYHFTRFENPAALKPALLELCKAQGVTGTLLLAPEGVNGTITGSRAGIDAVLAHLKALPGCDGLEWKEAQSERANFGKMKVRIKREIVTMKQPDVDPRAKTGHYVTPADWNALIAQPDVAVIDTRNDYEVEIGTFEGAIDPKTRSFGEFPAWWEANKHRFHNKKIAMFCTGGIRCEKSTNYLLGQGVEDVFHLKGGILQYLEDIPQDQSTWNGACFVFDNRVSVGHGLQEGPHLLCHGCRQPILPADKKRAEYEEGVSCHKCFDQTTSEDKARFRERQKQIELARKRARA</sequence>
<accession>Q16CK7</accession>
<comment type="function">
    <text evidence="1">Catalyzes oxygen-dependent 5-hydroxyuridine (ho5U) modification at position 34 in tRNAs.</text>
</comment>
<comment type="catalytic activity">
    <reaction evidence="1">
        <text>uridine(34) in tRNA + AH2 + O2 = 5-hydroxyuridine(34) in tRNA + A + H2O</text>
        <dbReference type="Rhea" id="RHEA:64224"/>
        <dbReference type="Rhea" id="RHEA-COMP:11727"/>
        <dbReference type="Rhea" id="RHEA-COMP:13381"/>
        <dbReference type="ChEBI" id="CHEBI:13193"/>
        <dbReference type="ChEBI" id="CHEBI:15377"/>
        <dbReference type="ChEBI" id="CHEBI:15379"/>
        <dbReference type="ChEBI" id="CHEBI:17499"/>
        <dbReference type="ChEBI" id="CHEBI:65315"/>
        <dbReference type="ChEBI" id="CHEBI:136877"/>
    </reaction>
</comment>
<comment type="similarity">
    <text evidence="1">Belongs to the TrhO family.</text>
</comment>
<organism>
    <name type="scientific">Roseobacter denitrificans (strain ATCC 33942 / OCh 114)</name>
    <name type="common">Erythrobacter sp. (strain OCh 114)</name>
    <name type="synonym">Roseobacter denitrificans</name>
    <dbReference type="NCBI Taxonomy" id="375451"/>
    <lineage>
        <taxon>Bacteria</taxon>
        <taxon>Pseudomonadati</taxon>
        <taxon>Pseudomonadota</taxon>
        <taxon>Alphaproteobacteria</taxon>
        <taxon>Rhodobacterales</taxon>
        <taxon>Roseobacteraceae</taxon>
        <taxon>Roseobacter</taxon>
    </lineage>
</organism>
<protein>
    <recommendedName>
        <fullName evidence="1">tRNA uridine(34) hydroxylase</fullName>
        <ecNumber evidence="1">1.14.-.-</ecNumber>
    </recommendedName>
    <alternativeName>
        <fullName evidence="1">tRNA hydroxylation protein O</fullName>
    </alternativeName>
</protein>
<feature type="chain" id="PRO_1000013768" description="tRNA uridine(34) hydroxylase">
    <location>
        <begin position="1"/>
        <end position="296"/>
    </location>
</feature>
<feature type="domain" description="Rhodanese" evidence="1">
    <location>
        <begin position="121"/>
        <end position="215"/>
    </location>
</feature>
<feature type="active site" description="Cysteine persulfide intermediate" evidence="1">
    <location>
        <position position="175"/>
    </location>
</feature>
<proteinExistence type="inferred from homology"/>